<evidence type="ECO:0000255" key="1">
    <source>
        <dbReference type="HAMAP-Rule" id="MF_01302"/>
    </source>
</evidence>
<evidence type="ECO:0000305" key="2"/>
<feature type="chain" id="PRO_0000428260" description="Small ribosomal subunit protein uS8">
    <location>
        <begin position="1"/>
        <end position="132"/>
    </location>
</feature>
<protein>
    <recommendedName>
        <fullName evidence="1">Small ribosomal subunit protein uS8</fullName>
    </recommendedName>
    <alternativeName>
        <fullName evidence="2">30S ribosomal protein S8</fullName>
    </alternativeName>
</protein>
<name>RS8_MYCTO</name>
<proteinExistence type="inferred from homology"/>
<comment type="function">
    <text evidence="1">One of the primary rRNA binding proteins, it binds directly to 16S rRNA central domain where it helps coordinate assembly of the platform of the 30S subunit.</text>
</comment>
<comment type="subunit">
    <text evidence="1">Part of the 30S ribosomal subunit. Contacts proteins S5 and S12.</text>
</comment>
<comment type="similarity">
    <text evidence="1">Belongs to the universal ribosomal protein uS8 family.</text>
</comment>
<organism>
    <name type="scientific">Mycobacterium tuberculosis (strain CDC 1551 / Oshkosh)</name>
    <dbReference type="NCBI Taxonomy" id="83331"/>
    <lineage>
        <taxon>Bacteria</taxon>
        <taxon>Bacillati</taxon>
        <taxon>Actinomycetota</taxon>
        <taxon>Actinomycetes</taxon>
        <taxon>Mycobacteriales</taxon>
        <taxon>Mycobacteriaceae</taxon>
        <taxon>Mycobacterium</taxon>
        <taxon>Mycobacterium tuberculosis complex</taxon>
    </lineage>
</organism>
<accession>P9WH26</accession>
<accession>L0T7I4</accession>
<accession>P66625</accession>
<accession>P95066</accession>
<reference key="1">
    <citation type="journal article" date="2002" name="J. Bacteriol.">
        <title>Whole-genome comparison of Mycobacterium tuberculosis clinical and laboratory strains.</title>
        <authorList>
            <person name="Fleischmann R.D."/>
            <person name="Alland D."/>
            <person name="Eisen J.A."/>
            <person name="Carpenter L."/>
            <person name="White O."/>
            <person name="Peterson J.D."/>
            <person name="DeBoy R.T."/>
            <person name="Dodson R.J."/>
            <person name="Gwinn M.L."/>
            <person name="Haft D.H."/>
            <person name="Hickey E.K."/>
            <person name="Kolonay J.F."/>
            <person name="Nelson W.C."/>
            <person name="Umayam L.A."/>
            <person name="Ermolaeva M.D."/>
            <person name="Salzberg S.L."/>
            <person name="Delcher A."/>
            <person name="Utterback T.R."/>
            <person name="Weidman J.F."/>
            <person name="Khouri H.M."/>
            <person name="Gill J."/>
            <person name="Mikula A."/>
            <person name="Bishai W."/>
            <person name="Jacobs W.R. Jr."/>
            <person name="Venter J.C."/>
            <person name="Fraser C.M."/>
        </authorList>
    </citation>
    <scope>NUCLEOTIDE SEQUENCE [LARGE SCALE GENOMIC DNA]</scope>
    <source>
        <strain>CDC 1551 / Oshkosh</strain>
    </source>
</reference>
<gene>
    <name evidence="1" type="primary">rpsH</name>
    <name type="ordered locus">MT0743</name>
</gene>
<sequence length="132" mass="14412">MTMTDPIADFLTRLRNANSAYHDEVSLPHSKLKANIAQILKNEGYISDFRTEDARVGKSLVIQLKYGPSRERSIAGLRRVSKPGLRVYAKSTNLPRVLGGLGVAIISTSSGLLTDRQAARQGVGGEVLAYVW</sequence>
<dbReference type="EMBL" id="AE000516">
    <property type="protein sequence ID" value="AAK44977.1"/>
    <property type="molecule type" value="Genomic_DNA"/>
</dbReference>
<dbReference type="PIR" id="A70644">
    <property type="entry name" value="A70644"/>
</dbReference>
<dbReference type="RefSeq" id="WP_003403669.1">
    <property type="nucleotide sequence ID" value="NZ_KK341227.1"/>
</dbReference>
<dbReference type="SMR" id="P9WH26"/>
<dbReference type="GeneID" id="45424683"/>
<dbReference type="KEGG" id="mtc:MT0743"/>
<dbReference type="PATRIC" id="fig|83331.31.peg.796"/>
<dbReference type="HOGENOM" id="CLU_098428_0_1_11"/>
<dbReference type="Proteomes" id="UP000001020">
    <property type="component" value="Chromosome"/>
</dbReference>
<dbReference type="GO" id="GO:1990904">
    <property type="term" value="C:ribonucleoprotein complex"/>
    <property type="evidence" value="ECO:0007669"/>
    <property type="project" value="UniProtKB-KW"/>
</dbReference>
<dbReference type="GO" id="GO:0005840">
    <property type="term" value="C:ribosome"/>
    <property type="evidence" value="ECO:0007669"/>
    <property type="project" value="UniProtKB-KW"/>
</dbReference>
<dbReference type="GO" id="GO:0019843">
    <property type="term" value="F:rRNA binding"/>
    <property type="evidence" value="ECO:0007669"/>
    <property type="project" value="UniProtKB-UniRule"/>
</dbReference>
<dbReference type="GO" id="GO:0003735">
    <property type="term" value="F:structural constituent of ribosome"/>
    <property type="evidence" value="ECO:0007669"/>
    <property type="project" value="InterPro"/>
</dbReference>
<dbReference type="GO" id="GO:0006412">
    <property type="term" value="P:translation"/>
    <property type="evidence" value="ECO:0007669"/>
    <property type="project" value="UniProtKB-UniRule"/>
</dbReference>
<dbReference type="FunFam" id="3.30.1370.30:FF:000002">
    <property type="entry name" value="30S ribosomal protein S8"/>
    <property type="match status" value="1"/>
</dbReference>
<dbReference type="FunFam" id="3.30.1490.10:FF:000001">
    <property type="entry name" value="30S ribosomal protein S8"/>
    <property type="match status" value="1"/>
</dbReference>
<dbReference type="Gene3D" id="3.30.1370.30">
    <property type="match status" value="1"/>
</dbReference>
<dbReference type="Gene3D" id="3.30.1490.10">
    <property type="match status" value="1"/>
</dbReference>
<dbReference type="HAMAP" id="MF_01302_B">
    <property type="entry name" value="Ribosomal_uS8_B"/>
    <property type="match status" value="1"/>
</dbReference>
<dbReference type="InterPro" id="IPR000630">
    <property type="entry name" value="Ribosomal_uS8"/>
</dbReference>
<dbReference type="InterPro" id="IPR047863">
    <property type="entry name" value="Ribosomal_uS8_CS"/>
</dbReference>
<dbReference type="InterPro" id="IPR035987">
    <property type="entry name" value="Ribosomal_uS8_sf"/>
</dbReference>
<dbReference type="NCBIfam" id="NF001109">
    <property type="entry name" value="PRK00136.1"/>
    <property type="match status" value="1"/>
</dbReference>
<dbReference type="PANTHER" id="PTHR11758">
    <property type="entry name" value="40S RIBOSOMAL PROTEIN S15A"/>
    <property type="match status" value="1"/>
</dbReference>
<dbReference type="Pfam" id="PF00410">
    <property type="entry name" value="Ribosomal_S8"/>
    <property type="match status" value="1"/>
</dbReference>
<dbReference type="SUPFAM" id="SSF56047">
    <property type="entry name" value="Ribosomal protein S8"/>
    <property type="match status" value="1"/>
</dbReference>
<dbReference type="PROSITE" id="PS00053">
    <property type="entry name" value="RIBOSOMAL_S8"/>
    <property type="match status" value="1"/>
</dbReference>
<keyword id="KW-1185">Reference proteome</keyword>
<keyword id="KW-0687">Ribonucleoprotein</keyword>
<keyword id="KW-0689">Ribosomal protein</keyword>
<keyword id="KW-0694">RNA-binding</keyword>
<keyword id="KW-0699">rRNA-binding</keyword>